<sequence>MGLPWYRVHTVVLNDPGRLLAVHIMHTALVAGWAGSMALYELAVFDPSDPVLDPMWRQGMFVIPFMTRLGITNSWGGWSITGGTITNPGIWSYEGVAGAHIVFSGLCFLAAIWHWVYWDLEIFCDERTGKPSLDLPKIFGIHLFLSGVACFGFGAFHVTGLYGPGIWVSDPYGLTGKVQSVNPAWGVEGFDPFVPGGIASHHIAAGTLGILAGLFHLSVRPPQRLYKGLRMGNIETVLSSSIAAVFFAAFVVAGTMWYGSATTPIELFGPTRYQWDQGYFQQEIYRRVGVSLAENKSLSEAWSKIPEKLAFYDYIGNNPAKGGLFRAGSMDNGDGIAVGWLGHPIFRDKEGRELFVRRMPTFFETFPVVLVDGDGIVRADVPFRRAESKYSVEQVGVTVEFYGGELNGVSYSDPATVKKYARRAQLGEIFELDRATLKSDGVFRSSPRGWFTFGHASFALLFFFGHIWHGARTLFRDVFAGIDPDLDAQVEFGAFQKLGDPTTRRQVV</sequence>
<feature type="chain" id="PRO_0000359800" description="Photosystem II CP47 reaction center protein">
    <location>
        <begin position="1"/>
        <end position="508"/>
    </location>
</feature>
<feature type="transmembrane region" description="Helical" evidence="1">
    <location>
        <begin position="21"/>
        <end position="36"/>
    </location>
</feature>
<feature type="transmembrane region" description="Helical" evidence="1">
    <location>
        <begin position="101"/>
        <end position="115"/>
    </location>
</feature>
<feature type="transmembrane region" description="Helical" evidence="1">
    <location>
        <begin position="140"/>
        <end position="156"/>
    </location>
</feature>
<feature type="transmembrane region" description="Helical" evidence="1">
    <location>
        <begin position="203"/>
        <end position="218"/>
    </location>
</feature>
<feature type="transmembrane region" description="Helical" evidence="1">
    <location>
        <begin position="237"/>
        <end position="252"/>
    </location>
</feature>
<feature type="transmembrane region" description="Helical" evidence="1">
    <location>
        <begin position="457"/>
        <end position="472"/>
    </location>
</feature>
<organism>
    <name type="scientific">Buxus microphylla</name>
    <name type="common">Littleleaf boxwood</name>
    <name type="synonym">Japanese boxwood</name>
    <dbReference type="NCBI Taxonomy" id="153571"/>
    <lineage>
        <taxon>Eukaryota</taxon>
        <taxon>Viridiplantae</taxon>
        <taxon>Streptophyta</taxon>
        <taxon>Embryophyta</taxon>
        <taxon>Tracheophyta</taxon>
        <taxon>Spermatophyta</taxon>
        <taxon>Magnoliopsida</taxon>
        <taxon>Buxales</taxon>
        <taxon>Buxaceae</taxon>
        <taxon>Buxus</taxon>
    </lineage>
</organism>
<geneLocation type="chloroplast"/>
<dbReference type="EMBL" id="EF380351">
    <property type="protein sequence ID" value="ABQ45274.1"/>
    <property type="molecule type" value="Genomic_DNA"/>
</dbReference>
<dbReference type="RefSeq" id="YP_001294210.1">
    <property type="nucleotide sequence ID" value="NC_009599.1"/>
</dbReference>
<dbReference type="SMR" id="A6MM62"/>
<dbReference type="GeneID" id="5236835"/>
<dbReference type="GO" id="GO:0009535">
    <property type="term" value="C:chloroplast thylakoid membrane"/>
    <property type="evidence" value="ECO:0007669"/>
    <property type="project" value="UniProtKB-SubCell"/>
</dbReference>
<dbReference type="GO" id="GO:0009523">
    <property type="term" value="C:photosystem II"/>
    <property type="evidence" value="ECO:0007669"/>
    <property type="project" value="UniProtKB-KW"/>
</dbReference>
<dbReference type="GO" id="GO:0016168">
    <property type="term" value="F:chlorophyll binding"/>
    <property type="evidence" value="ECO:0007669"/>
    <property type="project" value="UniProtKB-UniRule"/>
</dbReference>
<dbReference type="GO" id="GO:0045156">
    <property type="term" value="F:electron transporter, transferring electrons within the cyclic electron transport pathway of photosynthesis activity"/>
    <property type="evidence" value="ECO:0007669"/>
    <property type="project" value="InterPro"/>
</dbReference>
<dbReference type="GO" id="GO:0009772">
    <property type="term" value="P:photosynthetic electron transport in photosystem II"/>
    <property type="evidence" value="ECO:0007669"/>
    <property type="project" value="InterPro"/>
</dbReference>
<dbReference type="FunFam" id="3.10.680.10:FF:000001">
    <property type="entry name" value="Photosystem II CP47 reaction center protein"/>
    <property type="match status" value="1"/>
</dbReference>
<dbReference type="Gene3D" id="3.10.680.10">
    <property type="entry name" value="Photosystem II CP47 reaction center protein"/>
    <property type="match status" value="1"/>
</dbReference>
<dbReference type="HAMAP" id="MF_01495">
    <property type="entry name" value="PSII_PsbB_CP47"/>
    <property type="match status" value="1"/>
</dbReference>
<dbReference type="InterPro" id="IPR000932">
    <property type="entry name" value="PS_antenna-like"/>
</dbReference>
<dbReference type="InterPro" id="IPR036001">
    <property type="entry name" value="PS_II_antenna-like_sf"/>
</dbReference>
<dbReference type="InterPro" id="IPR017486">
    <property type="entry name" value="PSII_PsbB"/>
</dbReference>
<dbReference type="NCBIfam" id="TIGR03039">
    <property type="entry name" value="PS_II_CP47"/>
    <property type="match status" value="1"/>
</dbReference>
<dbReference type="PANTHER" id="PTHR33180">
    <property type="entry name" value="PHOTOSYSTEM II CP43 REACTION CENTER PROTEIN"/>
    <property type="match status" value="1"/>
</dbReference>
<dbReference type="PANTHER" id="PTHR33180:SF38">
    <property type="entry name" value="PHOTOSYSTEM II CP47 REACTION CENTER PROTEIN"/>
    <property type="match status" value="1"/>
</dbReference>
<dbReference type="Pfam" id="PF00421">
    <property type="entry name" value="PSII"/>
    <property type="match status" value="1"/>
</dbReference>
<dbReference type="SUPFAM" id="SSF161077">
    <property type="entry name" value="Photosystem II antenna protein-like"/>
    <property type="match status" value="1"/>
</dbReference>
<accession>A6MM62</accession>
<keyword id="KW-0148">Chlorophyll</keyword>
<keyword id="KW-0150">Chloroplast</keyword>
<keyword id="KW-0157">Chromophore</keyword>
<keyword id="KW-0472">Membrane</keyword>
<keyword id="KW-0602">Photosynthesis</keyword>
<keyword id="KW-0604">Photosystem II</keyword>
<keyword id="KW-0934">Plastid</keyword>
<keyword id="KW-0793">Thylakoid</keyword>
<keyword id="KW-0812">Transmembrane</keyword>
<keyword id="KW-1133">Transmembrane helix</keyword>
<proteinExistence type="inferred from homology"/>
<gene>
    <name evidence="1" type="primary">psbB</name>
</gene>
<protein>
    <recommendedName>
        <fullName evidence="1">Photosystem II CP47 reaction center protein</fullName>
    </recommendedName>
    <alternativeName>
        <fullName evidence="1">PSII 47 kDa protein</fullName>
    </alternativeName>
    <alternativeName>
        <fullName evidence="1">Protein CP-47</fullName>
    </alternativeName>
</protein>
<evidence type="ECO:0000255" key="1">
    <source>
        <dbReference type="HAMAP-Rule" id="MF_01495"/>
    </source>
</evidence>
<comment type="function">
    <text evidence="1">One of the components of the core complex of photosystem II (PSII). It binds chlorophyll and helps catalyze the primary light-induced photochemical processes of PSII. PSII is a light-driven water:plastoquinone oxidoreductase, using light energy to abstract electrons from H(2)O, generating O(2) and a proton gradient subsequently used for ATP formation.</text>
</comment>
<comment type="cofactor">
    <text evidence="1">Binds multiple chlorophylls. PSII binds additional chlorophylls, carotenoids and specific lipids.</text>
</comment>
<comment type="subunit">
    <text evidence="1">PSII is composed of 1 copy each of membrane proteins PsbA, PsbB, PsbC, PsbD, PsbE, PsbF, PsbH, PsbI, PsbJ, PsbK, PsbL, PsbM, PsbT, PsbX, PsbY, PsbZ, Psb30/Ycf12, at least 3 peripheral proteins of the oxygen-evolving complex and a large number of cofactors. It forms dimeric complexes.</text>
</comment>
<comment type="subcellular location">
    <subcellularLocation>
        <location evidence="1">Plastid</location>
        <location evidence="1">Chloroplast thylakoid membrane</location>
        <topology evidence="1">Multi-pass membrane protein</topology>
    </subcellularLocation>
</comment>
<comment type="similarity">
    <text evidence="1">Belongs to the PsbB/PsbC family. PsbB subfamily.</text>
</comment>
<name>PSBB_BUXMI</name>
<reference key="1">
    <citation type="journal article" date="2007" name="Mol. Phylogenet. Evol.">
        <title>Phylogenetic and evolutionary implications of complete chloroplast genome sequences of four early-diverging angiosperms: Buxus (Buxaceae), Chloranthus (Chloranthaceae), Dioscorea (Dioscoreaceae), and Illicium (Schisandraceae).</title>
        <authorList>
            <person name="Hansen D.R."/>
            <person name="Dastidar S.G."/>
            <person name="Cai Z."/>
            <person name="Penaflor C."/>
            <person name="Kuehl J.V."/>
            <person name="Boore J.L."/>
            <person name="Jansen R.K."/>
        </authorList>
    </citation>
    <scope>NUCLEOTIDE SEQUENCE [LARGE SCALE GENOMIC DNA]</scope>
</reference>